<protein>
    <recommendedName>
        <fullName evidence="1">Peptidyl-tRNA hydrolase</fullName>
        <shortName evidence="1">Pth</shortName>
        <ecNumber evidence="1">3.1.1.29</ecNumber>
    </recommendedName>
</protein>
<dbReference type="EC" id="3.1.1.29" evidence="1"/>
<dbReference type="EMBL" id="CU468230">
    <property type="protein sequence ID" value="CAP01935.1"/>
    <property type="molecule type" value="Genomic_DNA"/>
</dbReference>
<dbReference type="SMR" id="B0VTX2"/>
<dbReference type="KEGG" id="abm:ABSDF2629"/>
<dbReference type="HOGENOM" id="CLU_062456_3_1_6"/>
<dbReference type="Proteomes" id="UP000001741">
    <property type="component" value="Chromosome"/>
</dbReference>
<dbReference type="GO" id="GO:0005737">
    <property type="term" value="C:cytoplasm"/>
    <property type="evidence" value="ECO:0007669"/>
    <property type="project" value="UniProtKB-SubCell"/>
</dbReference>
<dbReference type="GO" id="GO:0004045">
    <property type="term" value="F:peptidyl-tRNA hydrolase activity"/>
    <property type="evidence" value="ECO:0007669"/>
    <property type="project" value="UniProtKB-UniRule"/>
</dbReference>
<dbReference type="GO" id="GO:0000049">
    <property type="term" value="F:tRNA binding"/>
    <property type="evidence" value="ECO:0007669"/>
    <property type="project" value="UniProtKB-UniRule"/>
</dbReference>
<dbReference type="GO" id="GO:0006515">
    <property type="term" value="P:protein quality control for misfolded or incompletely synthesized proteins"/>
    <property type="evidence" value="ECO:0007669"/>
    <property type="project" value="UniProtKB-UniRule"/>
</dbReference>
<dbReference type="GO" id="GO:0072344">
    <property type="term" value="P:rescue of stalled ribosome"/>
    <property type="evidence" value="ECO:0007669"/>
    <property type="project" value="UniProtKB-UniRule"/>
</dbReference>
<dbReference type="CDD" id="cd00462">
    <property type="entry name" value="PTH"/>
    <property type="match status" value="1"/>
</dbReference>
<dbReference type="FunFam" id="3.40.50.1470:FF:000001">
    <property type="entry name" value="Peptidyl-tRNA hydrolase"/>
    <property type="match status" value="1"/>
</dbReference>
<dbReference type="Gene3D" id="3.40.50.1470">
    <property type="entry name" value="Peptidyl-tRNA hydrolase"/>
    <property type="match status" value="1"/>
</dbReference>
<dbReference type="HAMAP" id="MF_00083">
    <property type="entry name" value="Pept_tRNA_hydro_bact"/>
    <property type="match status" value="1"/>
</dbReference>
<dbReference type="InterPro" id="IPR001328">
    <property type="entry name" value="Pept_tRNA_hydro"/>
</dbReference>
<dbReference type="InterPro" id="IPR018171">
    <property type="entry name" value="Pept_tRNA_hydro_CS"/>
</dbReference>
<dbReference type="InterPro" id="IPR036416">
    <property type="entry name" value="Pept_tRNA_hydro_sf"/>
</dbReference>
<dbReference type="NCBIfam" id="TIGR00447">
    <property type="entry name" value="pth"/>
    <property type="match status" value="1"/>
</dbReference>
<dbReference type="PANTHER" id="PTHR17224">
    <property type="entry name" value="PEPTIDYL-TRNA HYDROLASE"/>
    <property type="match status" value="1"/>
</dbReference>
<dbReference type="PANTHER" id="PTHR17224:SF1">
    <property type="entry name" value="PEPTIDYL-TRNA HYDROLASE"/>
    <property type="match status" value="1"/>
</dbReference>
<dbReference type="Pfam" id="PF01195">
    <property type="entry name" value="Pept_tRNA_hydro"/>
    <property type="match status" value="1"/>
</dbReference>
<dbReference type="SUPFAM" id="SSF53178">
    <property type="entry name" value="Peptidyl-tRNA hydrolase-like"/>
    <property type="match status" value="1"/>
</dbReference>
<dbReference type="PROSITE" id="PS01195">
    <property type="entry name" value="PEPT_TRNA_HYDROL_1"/>
    <property type="match status" value="1"/>
</dbReference>
<dbReference type="PROSITE" id="PS01196">
    <property type="entry name" value="PEPT_TRNA_HYDROL_2"/>
    <property type="match status" value="1"/>
</dbReference>
<name>PTH_ACIBS</name>
<proteinExistence type="inferred from homology"/>
<sequence length="193" mass="20911">MSNISLIVGLGNPGSEYAQTRHNAGFWFVEQLADKYGITLKNDPKFHGISGRGNIEGHDVRLLLPMTYMNRSGQSVVPFSKFYQIAPEAILIAHDELDMNPGVIRLKTGGGHGGHNGLRDIVPHIGPNFHRLRIGIGHPGSKERVSGHVLGKAPSSEQSLMDGAIDHALSKVKLLVQGQVPQAMNQINAYKPA</sequence>
<evidence type="ECO:0000255" key="1">
    <source>
        <dbReference type="HAMAP-Rule" id="MF_00083"/>
    </source>
</evidence>
<gene>
    <name evidence="1" type="primary">pth</name>
    <name type="ordered locus">ABSDF2629</name>
</gene>
<comment type="function">
    <text evidence="1">Hydrolyzes ribosome-free peptidyl-tRNAs (with 1 or more amino acids incorporated), which drop off the ribosome during protein synthesis, or as a result of ribosome stalling.</text>
</comment>
<comment type="function">
    <text evidence="1">Catalyzes the release of premature peptidyl moieties from peptidyl-tRNA molecules trapped in stalled 50S ribosomal subunits, and thus maintains levels of free tRNAs and 50S ribosomes.</text>
</comment>
<comment type="catalytic activity">
    <reaction evidence="1">
        <text>an N-acyl-L-alpha-aminoacyl-tRNA + H2O = an N-acyl-L-amino acid + a tRNA + H(+)</text>
        <dbReference type="Rhea" id="RHEA:54448"/>
        <dbReference type="Rhea" id="RHEA-COMP:10123"/>
        <dbReference type="Rhea" id="RHEA-COMP:13883"/>
        <dbReference type="ChEBI" id="CHEBI:15377"/>
        <dbReference type="ChEBI" id="CHEBI:15378"/>
        <dbReference type="ChEBI" id="CHEBI:59874"/>
        <dbReference type="ChEBI" id="CHEBI:78442"/>
        <dbReference type="ChEBI" id="CHEBI:138191"/>
        <dbReference type="EC" id="3.1.1.29"/>
    </reaction>
</comment>
<comment type="subunit">
    <text evidence="1">Monomer.</text>
</comment>
<comment type="subcellular location">
    <subcellularLocation>
        <location evidence="1">Cytoplasm</location>
    </subcellularLocation>
</comment>
<comment type="similarity">
    <text evidence="1">Belongs to the PTH family.</text>
</comment>
<feature type="chain" id="PRO_1000092898" description="Peptidyl-tRNA hydrolase">
    <location>
        <begin position="1"/>
        <end position="193"/>
    </location>
</feature>
<feature type="active site" description="Proton acceptor" evidence="1">
    <location>
        <position position="22"/>
    </location>
</feature>
<feature type="binding site" evidence="1">
    <location>
        <position position="17"/>
    </location>
    <ligand>
        <name>tRNA</name>
        <dbReference type="ChEBI" id="CHEBI:17843"/>
    </ligand>
</feature>
<feature type="binding site" evidence="1">
    <location>
        <position position="68"/>
    </location>
    <ligand>
        <name>tRNA</name>
        <dbReference type="ChEBI" id="CHEBI:17843"/>
    </ligand>
</feature>
<feature type="binding site" evidence="1">
    <location>
        <position position="70"/>
    </location>
    <ligand>
        <name>tRNA</name>
        <dbReference type="ChEBI" id="CHEBI:17843"/>
    </ligand>
</feature>
<feature type="binding site" evidence="1">
    <location>
        <position position="116"/>
    </location>
    <ligand>
        <name>tRNA</name>
        <dbReference type="ChEBI" id="CHEBI:17843"/>
    </ligand>
</feature>
<feature type="site" description="Discriminates between blocked and unblocked aminoacyl-tRNA" evidence="1">
    <location>
        <position position="12"/>
    </location>
</feature>
<feature type="site" description="Stabilizes the basic form of H active site to accept a proton" evidence="1">
    <location>
        <position position="95"/>
    </location>
</feature>
<reference key="1">
    <citation type="journal article" date="2008" name="PLoS ONE">
        <title>Comparative analysis of Acinetobacters: three genomes for three lifestyles.</title>
        <authorList>
            <person name="Vallenet D."/>
            <person name="Nordmann P."/>
            <person name="Barbe V."/>
            <person name="Poirel L."/>
            <person name="Mangenot S."/>
            <person name="Bataille E."/>
            <person name="Dossat C."/>
            <person name="Gas S."/>
            <person name="Kreimeyer A."/>
            <person name="Lenoble P."/>
            <person name="Oztas S."/>
            <person name="Poulain J."/>
            <person name="Segurens B."/>
            <person name="Robert C."/>
            <person name="Abergel C."/>
            <person name="Claverie J.-M."/>
            <person name="Raoult D."/>
            <person name="Medigue C."/>
            <person name="Weissenbach J."/>
            <person name="Cruveiller S."/>
        </authorList>
    </citation>
    <scope>NUCLEOTIDE SEQUENCE [LARGE SCALE GENOMIC DNA]</scope>
    <source>
        <strain>SDF</strain>
    </source>
</reference>
<organism>
    <name type="scientific">Acinetobacter baumannii (strain SDF)</name>
    <dbReference type="NCBI Taxonomy" id="509170"/>
    <lineage>
        <taxon>Bacteria</taxon>
        <taxon>Pseudomonadati</taxon>
        <taxon>Pseudomonadota</taxon>
        <taxon>Gammaproteobacteria</taxon>
        <taxon>Moraxellales</taxon>
        <taxon>Moraxellaceae</taxon>
        <taxon>Acinetobacter</taxon>
        <taxon>Acinetobacter calcoaceticus/baumannii complex</taxon>
    </lineage>
</organism>
<accession>B0VTX2</accession>
<keyword id="KW-0963">Cytoplasm</keyword>
<keyword id="KW-0378">Hydrolase</keyword>
<keyword id="KW-0694">RNA-binding</keyword>
<keyword id="KW-0820">tRNA-binding</keyword>